<reference key="1">
    <citation type="journal article" date="2003" name="Nat. Genet.">
        <title>Comparative analysis of the genome sequences of Bordetella pertussis, Bordetella parapertussis and Bordetella bronchiseptica.</title>
        <authorList>
            <person name="Parkhill J."/>
            <person name="Sebaihia M."/>
            <person name="Preston A."/>
            <person name="Murphy L.D."/>
            <person name="Thomson N.R."/>
            <person name="Harris D.E."/>
            <person name="Holden M.T.G."/>
            <person name="Churcher C.M."/>
            <person name="Bentley S.D."/>
            <person name="Mungall K.L."/>
            <person name="Cerdeno-Tarraga A.-M."/>
            <person name="Temple L."/>
            <person name="James K.D."/>
            <person name="Harris B."/>
            <person name="Quail M.A."/>
            <person name="Achtman M."/>
            <person name="Atkin R."/>
            <person name="Baker S."/>
            <person name="Basham D."/>
            <person name="Bason N."/>
            <person name="Cherevach I."/>
            <person name="Chillingworth T."/>
            <person name="Collins M."/>
            <person name="Cronin A."/>
            <person name="Davis P."/>
            <person name="Doggett J."/>
            <person name="Feltwell T."/>
            <person name="Goble A."/>
            <person name="Hamlin N."/>
            <person name="Hauser H."/>
            <person name="Holroyd S."/>
            <person name="Jagels K."/>
            <person name="Leather S."/>
            <person name="Moule S."/>
            <person name="Norberczak H."/>
            <person name="O'Neil S."/>
            <person name="Ormond D."/>
            <person name="Price C."/>
            <person name="Rabbinowitsch E."/>
            <person name="Rutter S."/>
            <person name="Sanders M."/>
            <person name="Saunders D."/>
            <person name="Seeger K."/>
            <person name="Sharp S."/>
            <person name="Simmonds M."/>
            <person name="Skelton J."/>
            <person name="Squares R."/>
            <person name="Squares S."/>
            <person name="Stevens K."/>
            <person name="Unwin L."/>
            <person name="Whitehead S."/>
            <person name="Barrell B.G."/>
            <person name="Maskell D.J."/>
        </authorList>
    </citation>
    <scope>NUCLEOTIDE SEQUENCE [LARGE SCALE GENOMIC DNA]</scope>
    <source>
        <strain>12822 / ATCC BAA-587 / NCTC 13253</strain>
    </source>
</reference>
<dbReference type="EC" id="4.2.1.33" evidence="1"/>
<dbReference type="EMBL" id="BX640428">
    <property type="protein sequence ID" value="CAE37243.1"/>
    <property type="status" value="ALT_INIT"/>
    <property type="molecule type" value="Genomic_DNA"/>
</dbReference>
<dbReference type="SMR" id="Q7W930"/>
<dbReference type="KEGG" id="bpa:BPP1943"/>
<dbReference type="HOGENOM" id="CLU_081378_0_3_4"/>
<dbReference type="UniPathway" id="UPA00048">
    <property type="reaction ID" value="UER00071"/>
</dbReference>
<dbReference type="Proteomes" id="UP000001421">
    <property type="component" value="Chromosome"/>
</dbReference>
<dbReference type="GO" id="GO:0009316">
    <property type="term" value="C:3-isopropylmalate dehydratase complex"/>
    <property type="evidence" value="ECO:0007669"/>
    <property type="project" value="InterPro"/>
</dbReference>
<dbReference type="GO" id="GO:0003861">
    <property type="term" value="F:3-isopropylmalate dehydratase activity"/>
    <property type="evidence" value="ECO:0007669"/>
    <property type="project" value="UniProtKB-UniRule"/>
</dbReference>
<dbReference type="GO" id="GO:0009098">
    <property type="term" value="P:L-leucine biosynthetic process"/>
    <property type="evidence" value="ECO:0007669"/>
    <property type="project" value="UniProtKB-UniRule"/>
</dbReference>
<dbReference type="CDD" id="cd01577">
    <property type="entry name" value="IPMI_Swivel"/>
    <property type="match status" value="1"/>
</dbReference>
<dbReference type="FunFam" id="3.20.19.10:FF:000003">
    <property type="entry name" value="3-isopropylmalate dehydratase small subunit"/>
    <property type="match status" value="1"/>
</dbReference>
<dbReference type="Gene3D" id="3.20.19.10">
    <property type="entry name" value="Aconitase, domain 4"/>
    <property type="match status" value="1"/>
</dbReference>
<dbReference type="HAMAP" id="MF_01031">
    <property type="entry name" value="LeuD_type1"/>
    <property type="match status" value="1"/>
</dbReference>
<dbReference type="InterPro" id="IPR004431">
    <property type="entry name" value="3-IsopropMal_deHydase_ssu"/>
</dbReference>
<dbReference type="InterPro" id="IPR015928">
    <property type="entry name" value="Aconitase/3IPM_dehydase_swvl"/>
</dbReference>
<dbReference type="InterPro" id="IPR000573">
    <property type="entry name" value="AconitaseA/IPMdHydase_ssu_swvl"/>
</dbReference>
<dbReference type="InterPro" id="IPR033940">
    <property type="entry name" value="IPMI_Swivel"/>
</dbReference>
<dbReference type="InterPro" id="IPR050075">
    <property type="entry name" value="LeuD"/>
</dbReference>
<dbReference type="NCBIfam" id="TIGR00171">
    <property type="entry name" value="leuD"/>
    <property type="match status" value="1"/>
</dbReference>
<dbReference type="NCBIfam" id="NF002458">
    <property type="entry name" value="PRK01641.1"/>
    <property type="match status" value="1"/>
</dbReference>
<dbReference type="PANTHER" id="PTHR43345:SF5">
    <property type="entry name" value="3-ISOPROPYLMALATE DEHYDRATASE SMALL SUBUNIT"/>
    <property type="match status" value="1"/>
</dbReference>
<dbReference type="PANTHER" id="PTHR43345">
    <property type="entry name" value="3-ISOPROPYLMALATE DEHYDRATASE SMALL SUBUNIT 2-RELATED-RELATED"/>
    <property type="match status" value="1"/>
</dbReference>
<dbReference type="Pfam" id="PF00694">
    <property type="entry name" value="Aconitase_C"/>
    <property type="match status" value="1"/>
</dbReference>
<dbReference type="SUPFAM" id="SSF52016">
    <property type="entry name" value="LeuD/IlvD-like"/>
    <property type="match status" value="1"/>
</dbReference>
<organism>
    <name type="scientific">Bordetella parapertussis (strain 12822 / ATCC BAA-587 / NCTC 13253)</name>
    <dbReference type="NCBI Taxonomy" id="257311"/>
    <lineage>
        <taxon>Bacteria</taxon>
        <taxon>Pseudomonadati</taxon>
        <taxon>Pseudomonadota</taxon>
        <taxon>Betaproteobacteria</taxon>
        <taxon>Burkholderiales</taxon>
        <taxon>Alcaligenaceae</taxon>
        <taxon>Bordetella</taxon>
    </lineage>
</organism>
<sequence>MQAFTQHEGLVAPLDRENVDTDLIIPKQFLKSIKRAGFGPNLFDELRYLDHGEPGMDNSKRPLNPDFVLNQPRYQGASVLLARKNFGCGSSREHAPWALTQYGFRAIIAPSYADIFFNNSFKNGLLPIVLGELEVARLFDEVKAFPGFKLNIDLERQVVIAPDGRELGFDIEPFRKYCLLNGLDDIGLTLRQADKIRAFEAERLARHPWLESRPVA</sequence>
<feature type="chain" id="PRO_0000141790" description="3-isopropylmalate dehydratase small subunit 1">
    <location>
        <begin position="1"/>
        <end position="216"/>
    </location>
</feature>
<protein>
    <recommendedName>
        <fullName evidence="1">3-isopropylmalate dehydratase small subunit 1</fullName>
        <ecNumber evidence="1">4.2.1.33</ecNumber>
    </recommendedName>
    <alternativeName>
        <fullName evidence="1">Alpha-IPM isomerase 1</fullName>
        <shortName evidence="1">IPMI 1</shortName>
    </alternativeName>
    <alternativeName>
        <fullName evidence="1">Isopropylmalate isomerase 1</fullName>
    </alternativeName>
</protein>
<gene>
    <name evidence="1" type="primary">leuD1</name>
    <name type="ordered locus">BPP1943</name>
</gene>
<accession>Q7W930</accession>
<evidence type="ECO:0000255" key="1">
    <source>
        <dbReference type="HAMAP-Rule" id="MF_01031"/>
    </source>
</evidence>
<evidence type="ECO:0000305" key="2"/>
<name>LEUD1_BORPA</name>
<comment type="function">
    <text evidence="1">Catalyzes the isomerization between 2-isopropylmalate and 3-isopropylmalate, via the formation of 2-isopropylmaleate.</text>
</comment>
<comment type="catalytic activity">
    <reaction evidence="1">
        <text>(2R,3S)-3-isopropylmalate = (2S)-2-isopropylmalate</text>
        <dbReference type="Rhea" id="RHEA:32287"/>
        <dbReference type="ChEBI" id="CHEBI:1178"/>
        <dbReference type="ChEBI" id="CHEBI:35121"/>
        <dbReference type="EC" id="4.2.1.33"/>
    </reaction>
</comment>
<comment type="pathway">
    <text evidence="1">Amino-acid biosynthesis; L-leucine biosynthesis; L-leucine from 3-methyl-2-oxobutanoate: step 2/4.</text>
</comment>
<comment type="subunit">
    <text evidence="1">Heterodimer of LeuC and LeuD.</text>
</comment>
<comment type="similarity">
    <text evidence="1">Belongs to the LeuD family. LeuD type 1 subfamily.</text>
</comment>
<comment type="sequence caution" evidence="2">
    <conflict type="erroneous initiation">
        <sequence resource="EMBL-CDS" id="CAE37243"/>
    </conflict>
</comment>
<proteinExistence type="inferred from homology"/>
<keyword id="KW-0028">Amino-acid biosynthesis</keyword>
<keyword id="KW-0100">Branched-chain amino acid biosynthesis</keyword>
<keyword id="KW-0432">Leucine biosynthesis</keyword>
<keyword id="KW-0456">Lyase</keyword>